<name>AHA1_CAEEL</name>
<reference evidence="15 16" key="1">
    <citation type="journal article" date="1998" name="Proc. Natl. Acad. Sci. U.S.A.">
        <title>Caenorhabditis elegans orthologs of the aryl hydrocarbon receptor and its heterodimerization partner the aryl hydrocarbon receptor nuclear translocator.</title>
        <authorList>
            <person name="Powell-Coffman J.A."/>
            <person name="Bradfield C.A."/>
            <person name="Wood W.B."/>
        </authorList>
    </citation>
    <scope>NUCLEOTIDE SEQUENCE [MRNA]</scope>
    <scope>FUNCTION</scope>
    <scope>INTERACTION WITH AHR-1</scope>
    <source>
        <strain evidence="11">Bristol N2</strain>
    </source>
</reference>
<reference evidence="15 17" key="2">
    <citation type="journal article" date="1998" name="Science">
        <title>Genome sequence of the nematode C. elegans: a platform for investigating biology.</title>
        <authorList>
            <consortium name="The C. elegans sequencing consortium"/>
        </authorList>
    </citation>
    <scope>NUCLEOTIDE SEQUENCE [LARGE SCALE GENOMIC DNA]</scope>
    <scope>ALTERNATIVE SPLICING</scope>
    <source>
        <strain>Bristol N2</strain>
    </source>
</reference>
<reference evidence="15" key="3">
    <citation type="journal article" date="2001" name="Proc. Natl. Acad. Sci. U.S.A.">
        <title>The Caenorhabditis elegans hif-1 gene encodes a bHLH-PAS protein that is required for adaptation to hypoxia.</title>
        <authorList>
            <person name="Jiang H."/>
            <person name="Guo R."/>
            <person name="Powell-Coffman J.A."/>
        </authorList>
    </citation>
    <scope>FUNCTION</scope>
    <scope>INTERACTION WITH HIF-1</scope>
    <scope>SUBCELLULAR LOCATION</scope>
    <scope>TISSUE SPECIFICITY</scope>
    <source>
        <strain evidence="6">Bristol N2</strain>
    </source>
</reference>
<reference evidence="15" key="4">
    <citation type="journal article" date="2004" name="Development">
        <title>The AHR-1 aryl hydrocarbon receptor and its co-factor the AHA-1 aryl hydrocarbon receptor nuclear translocator specify GABAergic neuron cell fate in C. elegans.</title>
        <authorList>
            <person name="Huang X."/>
            <person name="Powell-Coffman J.A."/>
            <person name="Jin Y."/>
        </authorList>
    </citation>
    <scope>FUNCTION</scope>
    <scope>DISRUPTION PHENOTYPE</scope>
    <source>
        <strain evidence="7">Bristol N2</strain>
    </source>
</reference>
<reference evidence="15" key="5">
    <citation type="journal article" date="2004" name="Dev. Biol.">
        <title>The Caenorhabditis elegans aryl hydrocarbon receptor, AHR-1, regulates neuronal development.</title>
        <authorList>
            <person name="Qin H."/>
            <person name="Powell-Coffman J.A."/>
        </authorList>
    </citation>
    <scope>FUNCTION</scope>
    <scope>DISRUPTION PHENOTYPE</scope>
    <source>
        <strain evidence="8">Bristol N2</strain>
    </source>
</reference>
<reference evidence="15" key="6">
    <citation type="journal article" date="2006" name="Dev. Biol.">
        <title>The Caenorhabditis elegans AHR-1 transcription complex controls expression of soluble guanylate cyclase genes in the URX neurons and regulates aggregation behavior.</title>
        <authorList>
            <person name="Qin H."/>
            <person name="Zhai Z."/>
            <person name="Powell-Coffman J.A."/>
        </authorList>
    </citation>
    <scope>FUNCTION</scope>
    <scope>DISRUPTION PHENOTYPE</scope>
    <source>
        <strain evidence="9">Bristol N2</strain>
    </source>
</reference>
<reference key="7">
    <citation type="journal article" date="2007" name="Gene">
        <title>Characterization of Drosophila and Caenorhabditis elegans NXF-like-factors, putative homologs of mammalian NXF.</title>
        <authorList>
            <person name="Ooe N."/>
            <person name="Saito K."/>
            <person name="Oeda K."/>
            <person name="Nakatuka I."/>
            <person name="Kaneko H."/>
        </authorList>
    </citation>
    <scope>FUNCTION</scope>
    <scope>INTERACTION WITH CKY-1</scope>
</reference>
<comment type="function">
    <text evidence="6 7 8 9 10 11">Transcription factor (PubMed:17628356). Efficient DNA binding requires dimerization with another bHLH protein, such as cky-1 or ahr-1 (PubMed:17628356, PubMed:9501178). Regulates transcription of target genes, probably acting in complex with cky-1 (PubMed:17628356). Has a role in cellular differentiation (PubMed:15136141, PubMed:9501178). Required for pharyngeal development (PubMed:14757639). In collaboration with ahr-1 it is involved in RMEL/R and SDQR neuron cell migration (PubMed:14757639). Acts in the cellular response to hypoxia (PubMed:11427734). Involved in aggregation behavior by regulating soluble guanylate cyclase gene expression in the URX neurons (PubMed:16919260).</text>
</comment>
<comment type="subunit">
    <text evidence="6 10 11">Interacts with hif-1 (PubMed:11427734). Heterodimer; efficient DNA binding requires dimerization with another bHLH protein (PubMed:17628356, PubMed:9501178). Forms a heterodimer with ahr-1; binds DNA as heterodimer (PubMed:9501178). Forms a heterodimer with PAS domain-containing protein cky-1; binds DNA as heterodimer (PubMed:17628356).</text>
</comment>
<comment type="interaction">
    <interactant intactId="EBI-2408984">
        <id>O02219</id>
    </interactant>
    <interactant intactId="EBI-2409183">
        <id>O44712</id>
        <label>ahr-1</label>
    </interactant>
    <organismsDiffer>false</organismsDiffer>
    <experiments>3</experiments>
</comment>
<comment type="interaction">
    <interactant intactId="EBI-2408984">
        <id>O02219</id>
    </interactant>
    <interactant intactId="EBI-319821">
        <id>G5EGD2</id>
        <label>hif-1</label>
    </interactant>
    <organismsDiffer>false</organismsDiffer>
    <experiments>3</experiments>
</comment>
<comment type="interaction">
    <interactant intactId="EBI-2408984">
        <id>O02219</id>
    </interactant>
    <interactant intactId="EBI-313013">
        <id>G5EFA5</id>
    </interactant>
    <organismsDiffer>false</organismsDiffer>
    <experiments>3</experiments>
</comment>
<comment type="subcellular location">
    <subcellularLocation>
        <location evidence="4 6">Nucleus</location>
    </subcellularLocation>
    <text evidence="6">Nuclear location dependent on hif-1 expression in intestinal tissue but not in neuronal cells.</text>
</comment>
<comment type="tissue specificity">
    <text evidence="6">Expressed in many cell types throughout development, including hypodermal cells, intestinal cells, pharyngeal cells, and neurons. Expressed in every cell during embryo.</text>
</comment>
<comment type="disruption phenotype">
    <text evidence="7 8 9">Abnormal cell morphology of developing RMEL/R neurons. Arrested development at larvae life stage due to its requirement in the pharynx. Defects in SDQR neuron cell dorsal-ventral migration. Aggregation behavior is diminished. Abolishes guanylate cyclase gene expression in the URX neurons.</text>
</comment>
<gene>
    <name evidence="18" type="primary">aha-1</name>
    <name type="ORF">C25A1.11</name>
</gene>
<keyword id="KW-0217">Developmental protein</keyword>
<keyword id="KW-0238">DNA-binding</keyword>
<keyword id="KW-0539">Nucleus</keyword>
<keyword id="KW-0675">Receptor</keyword>
<keyword id="KW-1185">Reference proteome</keyword>
<keyword id="KW-0677">Repeat</keyword>
<keyword id="KW-0804">Transcription</keyword>
<keyword id="KW-0805">Transcription regulation</keyword>
<evidence type="ECO:0000250" key="1">
    <source>
        <dbReference type="UniProtKB" id="O15945"/>
    </source>
</evidence>
<evidence type="ECO:0000255" key="2"/>
<evidence type="ECO:0000255" key="3">
    <source>
        <dbReference type="PROSITE-ProRule" id="PRU00140"/>
    </source>
</evidence>
<evidence type="ECO:0000255" key="4">
    <source>
        <dbReference type="PROSITE-ProRule" id="PRU00981"/>
    </source>
</evidence>
<evidence type="ECO:0000256" key="5">
    <source>
        <dbReference type="SAM" id="MobiDB-lite"/>
    </source>
</evidence>
<evidence type="ECO:0000269" key="6">
    <source>
    </source>
</evidence>
<evidence type="ECO:0000269" key="7">
    <source>
    </source>
</evidence>
<evidence type="ECO:0000269" key="8">
    <source>
    </source>
</evidence>
<evidence type="ECO:0000269" key="9">
    <source>
    </source>
</evidence>
<evidence type="ECO:0000269" key="10">
    <source>
    </source>
</evidence>
<evidence type="ECO:0000269" key="11">
    <source>
    </source>
</evidence>
<evidence type="ECO:0000303" key="12">
    <source>
    </source>
</evidence>
<evidence type="ECO:0000303" key="13">
    <source>
    </source>
</evidence>
<evidence type="ECO:0000303" key="14">
    <source>
    </source>
</evidence>
<evidence type="ECO:0000305" key="15"/>
<evidence type="ECO:0000312" key="16">
    <source>
        <dbReference type="EMBL" id="AAB99999.1"/>
    </source>
</evidence>
<evidence type="ECO:0000312" key="17">
    <source>
        <dbReference type="EMBL" id="CAB02764.1"/>
    </source>
</evidence>
<evidence type="ECO:0000312" key="18">
    <source>
        <dbReference type="WormBase" id="C25A1.11"/>
    </source>
</evidence>
<protein>
    <recommendedName>
        <fullName evidence="1 12 13">Aryl hydrocarbon receptor nuclear translocator homolog</fullName>
        <shortName evidence="12 13">ARNT</shortName>
    </recommendedName>
    <alternativeName>
        <fullName evidence="14">AHR-associated protein</fullName>
    </alternativeName>
</protein>
<proteinExistence type="evidence at protein level"/>
<feature type="chain" id="PRO_0000416049" description="Aryl hydrocarbon receptor nuclear translocator homolog">
    <location>
        <begin position="1"/>
        <end position="453"/>
    </location>
</feature>
<feature type="domain" description="bHLH" evidence="4">
    <location>
        <begin position="44"/>
        <end position="97"/>
    </location>
</feature>
<feature type="domain" description="PAS 1" evidence="3">
    <location>
        <begin position="115"/>
        <end position="193"/>
    </location>
</feature>
<feature type="domain" description="PAS 2" evidence="3">
    <location>
        <begin position="277"/>
        <end position="347"/>
    </location>
</feature>
<feature type="domain" description="PAC" evidence="2">
    <location>
        <begin position="348"/>
        <end position="392"/>
    </location>
</feature>
<feature type="region of interest" description="Disordered" evidence="5">
    <location>
        <begin position="410"/>
        <end position="453"/>
    </location>
</feature>
<sequence>MAQDIFMDPWQSATSFAMEDEDMGMPSGKYARMEDEMGENKERFARENHSEIERRRRNKMTHYINELAEMVPQCASLGRKPDKLTILRMAVSHMKGIRGHTAQDETSYKPSFLTDQELKHLILEAANGFLFVVCCQTGKVLYVADSITPVLNLKQEDWLQRNLNELIHPDDQDKIRDQLCGSEVSVNKVLDLKSGSVKREGASTRVHMSCRRGFICRMRVGALEPLHRLRNRRPLFQHAGQNYVVMHCTGYIKNAPPQGINAPASSCLVAIARLQVASMPVCADPTSTNQFSVRVSEDGKMTFIDARVSDLIGLSSDQLIGRYWWNLAHPADEKTLQDSFVALLSDQPMRINIRVRTSTDYIPCTVSAYKFMNPYSEQFEYVVATHQIAPQEDINNWVTAPTVPQPQASEFGELGGAPSAVDYGQSSSGGWRPEAQGAPQAQWQWDPMNGYNQ</sequence>
<organism>
    <name type="scientific">Caenorhabditis elegans</name>
    <dbReference type="NCBI Taxonomy" id="6239"/>
    <lineage>
        <taxon>Eukaryota</taxon>
        <taxon>Metazoa</taxon>
        <taxon>Ecdysozoa</taxon>
        <taxon>Nematoda</taxon>
        <taxon>Chromadorea</taxon>
        <taxon>Rhabditida</taxon>
        <taxon>Rhabditina</taxon>
        <taxon>Rhabditomorpha</taxon>
        <taxon>Rhabditoidea</taxon>
        <taxon>Rhabditidae</taxon>
        <taxon>Peloderinae</taxon>
        <taxon>Caenorhabditis</taxon>
    </lineage>
</organism>
<accession>O02219</accession>
<accession>G5EGG7</accession>
<dbReference type="EMBL" id="AF039569">
    <property type="protein sequence ID" value="AAB99999.1"/>
    <property type="molecule type" value="mRNA"/>
</dbReference>
<dbReference type="EMBL" id="Z81038">
    <property type="protein sequence ID" value="CAB02764.1"/>
    <property type="molecule type" value="Genomic_DNA"/>
</dbReference>
<dbReference type="EMBL" id="Z81038">
    <property type="protein sequence ID" value="CBH29653.1"/>
    <property type="molecule type" value="Genomic_DNA"/>
</dbReference>
<dbReference type="PIR" id="T19440">
    <property type="entry name" value="T19440"/>
</dbReference>
<dbReference type="PIR" id="T42397">
    <property type="entry name" value="T42397"/>
</dbReference>
<dbReference type="RefSeq" id="NP_001251326.1">
    <property type="nucleotide sequence ID" value="NM_001264397.1"/>
</dbReference>
<dbReference type="RefSeq" id="NP_001251327.1">
    <property type="nucleotide sequence ID" value="NM_001264398.3"/>
</dbReference>
<dbReference type="SMR" id="O02219"/>
<dbReference type="BioGRID" id="38307">
    <property type="interactions" value="13"/>
</dbReference>
<dbReference type="ComplexPortal" id="CPX-4002">
    <property type="entry name" value="Hsp90-cdc-37-aha-1 complex"/>
</dbReference>
<dbReference type="FunCoup" id="O02219">
    <property type="interactions" value="2785"/>
</dbReference>
<dbReference type="IntAct" id="O02219">
    <property type="interactions" value="11"/>
</dbReference>
<dbReference type="STRING" id="6239.C25A1.11a.1"/>
<dbReference type="PaxDb" id="6239-C25A1.11a"/>
<dbReference type="PeptideAtlas" id="O02219"/>
<dbReference type="EnsemblMetazoa" id="C25A1.11.1">
    <property type="protein sequence ID" value="C25A1.11.1"/>
    <property type="gene ID" value="WBGene00000095"/>
</dbReference>
<dbReference type="GeneID" id="172889"/>
<dbReference type="KEGG" id="cel:CELE_C25A1.11"/>
<dbReference type="UCSC" id="C25A1.11">
    <property type="organism name" value="c. elegans"/>
</dbReference>
<dbReference type="AGR" id="WB:WBGene00000095"/>
<dbReference type="CTD" id="172889"/>
<dbReference type="WormBase" id="C25A1.11">
    <property type="protein sequence ID" value="CE08377"/>
    <property type="gene ID" value="WBGene00000095"/>
    <property type="gene designation" value="aha-1"/>
</dbReference>
<dbReference type="eggNOG" id="KOG3561">
    <property type="taxonomic scope" value="Eukaryota"/>
</dbReference>
<dbReference type="GeneTree" id="ENSGT00940000169286"/>
<dbReference type="HOGENOM" id="CLU_011864_0_0_1"/>
<dbReference type="InParanoid" id="O02219"/>
<dbReference type="OMA" id="QFEYVVA"/>
<dbReference type="OrthoDB" id="71302at2759"/>
<dbReference type="PhylomeDB" id="O02219"/>
<dbReference type="Reactome" id="R-CEL-1234158">
    <property type="pathway name" value="Regulation of gene expression by Hypoxia-inducible Factor"/>
</dbReference>
<dbReference type="Reactome" id="R-CEL-9768919">
    <property type="pathway name" value="NPAS4 regulates expression of target genes"/>
</dbReference>
<dbReference type="PRO" id="PR:O02219"/>
<dbReference type="Proteomes" id="UP000001940">
    <property type="component" value="Chromosome I"/>
</dbReference>
<dbReference type="Bgee" id="WBGene00000095">
    <property type="expression patterns" value="Expressed in pharyngeal muscle cell (C elegans) and 4 other cell types or tissues"/>
</dbReference>
<dbReference type="GO" id="GO:0034751">
    <property type="term" value="C:aryl hydrocarbon receptor complex"/>
    <property type="evidence" value="ECO:0000318"/>
    <property type="project" value="GO_Central"/>
</dbReference>
<dbReference type="GO" id="GO:0005737">
    <property type="term" value="C:cytoplasm"/>
    <property type="evidence" value="ECO:0007669"/>
    <property type="project" value="InterPro"/>
</dbReference>
<dbReference type="GO" id="GO:0005634">
    <property type="term" value="C:nucleus"/>
    <property type="evidence" value="ECO:0000314"/>
    <property type="project" value="WormBase"/>
</dbReference>
<dbReference type="GO" id="GO:0101031">
    <property type="term" value="C:protein folding chaperone complex"/>
    <property type="evidence" value="ECO:0000314"/>
    <property type="project" value="ComplexPortal"/>
</dbReference>
<dbReference type="GO" id="GO:0090575">
    <property type="term" value="C:RNA polymerase II transcription regulator complex"/>
    <property type="evidence" value="ECO:0000314"/>
    <property type="project" value="WormBase"/>
</dbReference>
<dbReference type="GO" id="GO:0003677">
    <property type="term" value="F:DNA binding"/>
    <property type="evidence" value="ECO:0000314"/>
    <property type="project" value="WormBase"/>
</dbReference>
<dbReference type="GO" id="GO:0003700">
    <property type="term" value="F:DNA-binding transcription factor activity"/>
    <property type="evidence" value="ECO:0000314"/>
    <property type="project" value="WormBase"/>
</dbReference>
<dbReference type="GO" id="GO:0000981">
    <property type="term" value="F:DNA-binding transcription factor activity, RNA polymerase II-specific"/>
    <property type="evidence" value="ECO:0000318"/>
    <property type="project" value="GO_Central"/>
</dbReference>
<dbReference type="GO" id="GO:0046983">
    <property type="term" value="F:protein dimerization activity"/>
    <property type="evidence" value="ECO:0007669"/>
    <property type="project" value="InterPro"/>
</dbReference>
<dbReference type="GO" id="GO:0000978">
    <property type="term" value="F:RNA polymerase II cis-regulatory region sequence-specific DNA binding"/>
    <property type="evidence" value="ECO:0000318"/>
    <property type="project" value="GO_Central"/>
</dbReference>
<dbReference type="GO" id="GO:0061629">
    <property type="term" value="F:RNA polymerase II-specific DNA-binding transcription factor binding"/>
    <property type="evidence" value="ECO:0000353"/>
    <property type="project" value="WormBase"/>
</dbReference>
<dbReference type="GO" id="GO:0001708">
    <property type="term" value="P:cell fate specification"/>
    <property type="evidence" value="ECO:0000315"/>
    <property type="project" value="UniProtKB"/>
</dbReference>
<dbReference type="GO" id="GO:0008340">
    <property type="term" value="P:determination of adult lifespan"/>
    <property type="evidence" value="ECO:0000316"/>
    <property type="project" value="UniProtKB"/>
</dbReference>
<dbReference type="GO" id="GO:0030522">
    <property type="term" value="P:intracellular receptor signaling pathway"/>
    <property type="evidence" value="ECO:0000304"/>
    <property type="project" value="WormBase"/>
</dbReference>
<dbReference type="GO" id="GO:0022008">
    <property type="term" value="P:neurogenesis"/>
    <property type="evidence" value="ECO:0000315"/>
    <property type="project" value="UniProtKB"/>
</dbReference>
<dbReference type="GO" id="GO:0045944">
    <property type="term" value="P:positive regulation of transcription by RNA polymerase II"/>
    <property type="evidence" value="ECO:0000314"/>
    <property type="project" value="WormBase"/>
</dbReference>
<dbReference type="GO" id="GO:0006357">
    <property type="term" value="P:regulation of transcription by RNA polymerase II"/>
    <property type="evidence" value="ECO:0000314"/>
    <property type="project" value="WormBase"/>
</dbReference>
<dbReference type="GO" id="GO:0009410">
    <property type="term" value="P:response to xenobiotic stimulus"/>
    <property type="evidence" value="ECO:0000314"/>
    <property type="project" value="WormBase"/>
</dbReference>
<dbReference type="GO" id="GO:0035176">
    <property type="term" value="P:social behavior"/>
    <property type="evidence" value="ECO:0000315"/>
    <property type="project" value="UniProtKB"/>
</dbReference>
<dbReference type="CDD" id="cd18947">
    <property type="entry name" value="bHLH-PAS_ARNT"/>
    <property type="match status" value="1"/>
</dbReference>
<dbReference type="CDD" id="cd00130">
    <property type="entry name" value="PAS"/>
    <property type="match status" value="2"/>
</dbReference>
<dbReference type="FunFam" id="4.10.280.10:FF:000011">
    <property type="entry name" value="Aryl hydrocarbon receptor nuclear translocator 2"/>
    <property type="match status" value="1"/>
</dbReference>
<dbReference type="FunFam" id="3.30.450.20:FF:000171">
    <property type="entry name" value="Protein CBR-AHA-1"/>
    <property type="match status" value="1"/>
</dbReference>
<dbReference type="Gene3D" id="4.10.280.10">
    <property type="entry name" value="Helix-loop-helix DNA-binding domain"/>
    <property type="match status" value="1"/>
</dbReference>
<dbReference type="Gene3D" id="3.30.450.20">
    <property type="entry name" value="PAS domain"/>
    <property type="match status" value="2"/>
</dbReference>
<dbReference type="InterPro" id="IPR011598">
    <property type="entry name" value="bHLH_dom"/>
</dbReference>
<dbReference type="InterPro" id="IPR050933">
    <property type="entry name" value="Circadian_TF"/>
</dbReference>
<dbReference type="InterPro" id="IPR036638">
    <property type="entry name" value="HLH_DNA-bd_sf"/>
</dbReference>
<dbReference type="InterPro" id="IPR001067">
    <property type="entry name" value="Nuc_translocat"/>
</dbReference>
<dbReference type="InterPro" id="IPR000014">
    <property type="entry name" value="PAS"/>
</dbReference>
<dbReference type="InterPro" id="IPR035965">
    <property type="entry name" value="PAS-like_dom_sf"/>
</dbReference>
<dbReference type="InterPro" id="IPR013767">
    <property type="entry name" value="PAS_fold"/>
</dbReference>
<dbReference type="NCBIfam" id="TIGR00229">
    <property type="entry name" value="sensory_box"/>
    <property type="match status" value="1"/>
</dbReference>
<dbReference type="PANTHER" id="PTHR23042">
    <property type="entry name" value="CIRCADIAN PROTEIN CLOCK/ARNT/BMAL/PAS"/>
    <property type="match status" value="1"/>
</dbReference>
<dbReference type="Pfam" id="PF00010">
    <property type="entry name" value="HLH"/>
    <property type="match status" value="1"/>
</dbReference>
<dbReference type="Pfam" id="PF00989">
    <property type="entry name" value="PAS"/>
    <property type="match status" value="1"/>
</dbReference>
<dbReference type="Pfam" id="PF14598">
    <property type="entry name" value="PAS_11"/>
    <property type="match status" value="1"/>
</dbReference>
<dbReference type="PRINTS" id="PR00785">
    <property type="entry name" value="NCTRNSLOCATR"/>
</dbReference>
<dbReference type="SMART" id="SM00353">
    <property type="entry name" value="HLH"/>
    <property type="match status" value="1"/>
</dbReference>
<dbReference type="SMART" id="SM00091">
    <property type="entry name" value="PAS"/>
    <property type="match status" value="2"/>
</dbReference>
<dbReference type="SUPFAM" id="SSF47459">
    <property type="entry name" value="HLH, helix-loop-helix DNA-binding domain"/>
    <property type="match status" value="1"/>
</dbReference>
<dbReference type="SUPFAM" id="SSF55785">
    <property type="entry name" value="PYP-like sensor domain (PAS domain)"/>
    <property type="match status" value="2"/>
</dbReference>
<dbReference type="PROSITE" id="PS50888">
    <property type="entry name" value="BHLH"/>
    <property type="match status" value="1"/>
</dbReference>
<dbReference type="PROSITE" id="PS50112">
    <property type="entry name" value="PAS"/>
    <property type="match status" value="2"/>
</dbReference>